<keyword id="KW-0244">Early protein</keyword>
<keyword id="KW-1035">Host cytoplasm</keyword>
<keyword id="KW-1048">Host nucleus</keyword>
<keyword id="KW-1185">Reference proteome</keyword>
<feature type="chain" id="PRO_0000099378" description="Protein C4">
    <location>
        <begin position="1"/>
        <end position="316"/>
    </location>
</feature>
<organism>
    <name type="scientific">Vaccinia virus (strain Western Reserve)</name>
    <name type="common">VACV</name>
    <name type="synonym">Vaccinia virus (strain WR)</name>
    <dbReference type="NCBI Taxonomy" id="10254"/>
    <lineage>
        <taxon>Viruses</taxon>
        <taxon>Varidnaviria</taxon>
        <taxon>Bamfordvirae</taxon>
        <taxon>Nucleocytoviricota</taxon>
        <taxon>Pokkesviricetes</taxon>
        <taxon>Chitovirales</taxon>
        <taxon>Poxviridae</taxon>
        <taxon>Chordopoxvirinae</taxon>
        <taxon>Orthopoxvirus</taxon>
        <taxon>Vaccinia virus</taxon>
    </lineage>
</organism>
<accession>P17370</accession>
<accession>Q80HY4</accession>
<reference key="1">
    <citation type="journal article" date="1988" name="Virology">
        <title>Analysis of a large cluster of nonessential genes deleted from a vaccinia virus terminal transposition mutant.</title>
        <authorList>
            <person name="Kotwal G.J."/>
            <person name="Moss B."/>
        </authorList>
    </citation>
    <scope>NUCLEOTIDE SEQUENCE [GENOMIC DNA]</scope>
</reference>
<reference key="2">
    <citation type="submission" date="2003-02" db="EMBL/GenBank/DDBJ databases">
        <title>Sequencing of the coding region of Vaccinia-WR to an average 9-fold redundancy and an error rate of 0.16/10kb.</title>
        <authorList>
            <person name="Esposito J.J."/>
            <person name="Frace A.M."/>
            <person name="Sammons S.A."/>
            <person name="Olsen-Rasmussen M."/>
            <person name="Osborne J."/>
            <person name="Wohlhueter R."/>
        </authorList>
    </citation>
    <scope>NUCLEOTIDE SEQUENCE [LARGE SCALE GENOMIC DNA]</scope>
</reference>
<reference key="3">
    <citation type="journal article" date="2012" name="J. Gen. Virol.">
        <title>Vaccinia virus protein C4 inhibits NF-kappaB activation and promotes virus virulence.</title>
        <authorList>
            <person name="Ember S.W."/>
            <person name="Ren H."/>
            <person name="Ferguson B.J."/>
            <person name="Smith G.L."/>
        </authorList>
    </citation>
    <scope>FUNCTION</scope>
    <scope>SUBCELLULAR LOCATION</scope>
</reference>
<reference key="4">
    <citation type="journal article" date="2015" name="J. Virol.">
        <title>Deciphering poxvirus gene expression by RNA sequencing and ribosome profiling.</title>
        <authorList>
            <person name="Yang Z."/>
            <person name="Cao S."/>
            <person name="Martens C.A."/>
            <person name="Porcella S.F."/>
            <person name="Xie Z."/>
            <person name="Ma M."/>
            <person name="Shen B."/>
            <person name="Moss B."/>
        </authorList>
    </citation>
    <scope>INDUCTION</scope>
</reference>
<dbReference type="EMBL" id="M22812">
    <property type="protein sequence ID" value="AAA69604.1"/>
    <property type="status" value="ALT_FRAME"/>
    <property type="molecule type" value="Genomic_DNA"/>
</dbReference>
<dbReference type="EMBL" id="AY243312">
    <property type="protein sequence ID" value="AAO89303.1"/>
    <property type="molecule type" value="Genomic_DNA"/>
</dbReference>
<dbReference type="PIR" id="D33348">
    <property type="entry name" value="WZVZB4"/>
</dbReference>
<dbReference type="RefSeq" id="YP_232906.1">
    <property type="nucleotide sequence ID" value="NC_006998.1"/>
</dbReference>
<dbReference type="SMR" id="P17370"/>
<dbReference type="DNASU" id="3707639"/>
<dbReference type="GeneID" id="3707639"/>
<dbReference type="KEGG" id="vg:3707639"/>
<dbReference type="Proteomes" id="UP000000344">
    <property type="component" value="Genome"/>
</dbReference>
<dbReference type="GO" id="GO:0030430">
    <property type="term" value="C:host cell cytoplasm"/>
    <property type="evidence" value="ECO:0000314"/>
    <property type="project" value="UniProtKB"/>
</dbReference>
<dbReference type="GO" id="GO:0042025">
    <property type="term" value="C:host cell nucleus"/>
    <property type="evidence" value="ECO:0000314"/>
    <property type="project" value="UniProtKB"/>
</dbReference>
<dbReference type="GO" id="GO:0085034">
    <property type="term" value="P:symbiont-mediated suppression of host NF-kappaB cascade"/>
    <property type="evidence" value="ECO:0000314"/>
    <property type="project" value="UniProtKB"/>
</dbReference>
<dbReference type="InterPro" id="IPR005004">
    <property type="entry name" value="Poxvirus_C4/C10"/>
</dbReference>
<dbReference type="Pfam" id="PF03336">
    <property type="entry name" value="Pox_C4_C10"/>
    <property type="match status" value="1"/>
</dbReference>
<dbReference type="PIRSF" id="PIRSF003698">
    <property type="entry name" value="VAC_C10L"/>
    <property type="match status" value="1"/>
</dbReference>
<protein>
    <recommendedName>
        <fullName>Protein C4</fullName>
    </recommendedName>
</protein>
<comment type="function">
    <text evidence="1">Plays a role in the inhibition of host NF-kappa-B activation. Mechanistically, blocks the subunit p65/RELA translocation into the host nucleus.</text>
</comment>
<comment type="subcellular location">
    <subcellularLocation>
        <location evidence="1">Host cytoplasm</location>
    </subcellularLocation>
    <subcellularLocation>
        <location evidence="1">Host nucleus</location>
    </subcellularLocation>
</comment>
<comment type="induction">
    <text evidence="2">Expressed in the early phase of the viral replicative cycle.</text>
</comment>
<comment type="similarity">
    <text evidence="3">Belongs to the poxviridae OPG031 protein family.</text>
</comment>
<comment type="sequence caution" evidence="3">
    <conflict type="frameshift">
        <sequence resource="EMBL-CDS" id="AAA69604"/>
    </conflict>
</comment>
<proteinExistence type="evidence at transcript level"/>
<name>PG031_VACCW</name>
<evidence type="ECO:0000269" key="1">
    <source>
    </source>
</evidence>
<evidence type="ECO:0000269" key="2">
    <source>
    </source>
</evidence>
<evidence type="ECO:0000305" key="3"/>
<organismHost>
    <name type="scientific">Bos taurus</name>
    <name type="common">Bovine</name>
    <dbReference type="NCBI Taxonomy" id="9913"/>
</organismHost>
<gene>
    <name type="primary">OPG031</name>
    <name type="synonym">C4L</name>
    <name type="ORF">VACWR024</name>
</gene>
<sequence>MDTIKIFNHGEFDTIRNELVNLLKVVKWNTINSNVTVSSTDTIDISDCIREILYKQFKNVRNIEVSSDISFIKYNRFNDTTLTDDNVGYYLVIYLNRTKSVKTLIYPTPETVITSSEDIMFSKSLNFRFENVKRDYKLVMCSISLTYKPSICRIQYDNNKYLDISDSQECNNLCYCVITMDPHHLIDLETICVLVDKSGKCLLVNEFYIRFRKNHIYNSFADLCMDHIFELPNTKELFTLRNDDGRNIAWDNDKLESGNNTWIPKTDDEYKFLSKLMNIAKFNNTKFDYYVLVGDTDPCTVFTFKVTKYYINLNYE</sequence>